<accession>Q9X1F5</accession>
<name>Y1442_THEMA</name>
<comment type="function">
    <text evidence="1">In the phosphorylated form it could act as an anti-anti-sigma factor that counteracts an anti-sigma factor and thus releases a sigma factor from inhibition.</text>
</comment>
<comment type="PTM">
    <text evidence="1">Phosphorylated on a serine residue.</text>
</comment>
<comment type="similarity">
    <text evidence="3">Belongs to the anti-sigma-factor antagonist family.</text>
</comment>
<feature type="chain" id="PRO_0000194208" description="Putative anti-sigma factor antagonist TM_1442">
    <location>
        <begin position="1"/>
        <end position="110"/>
    </location>
</feature>
<feature type="domain" description="STAS" evidence="2">
    <location>
        <begin position="4"/>
        <end position="110"/>
    </location>
</feature>
<feature type="modified residue" description="Phosphoserine" evidence="1">
    <location>
        <position position="59"/>
    </location>
</feature>
<feature type="strand" evidence="4">
    <location>
        <begin position="5"/>
        <end position="11"/>
    </location>
</feature>
<feature type="strand" evidence="4">
    <location>
        <begin position="14"/>
        <end position="21"/>
    </location>
</feature>
<feature type="turn" evidence="4">
    <location>
        <begin position="25"/>
        <end position="27"/>
    </location>
</feature>
<feature type="helix" evidence="4">
    <location>
        <begin position="28"/>
        <end position="41"/>
    </location>
</feature>
<feature type="strand" evidence="4">
    <location>
        <begin position="45"/>
        <end position="53"/>
    </location>
</feature>
<feature type="helix" evidence="4">
    <location>
        <begin position="59"/>
        <end position="74"/>
    </location>
</feature>
<feature type="strand" evidence="4">
    <location>
        <begin position="78"/>
        <end position="83"/>
    </location>
</feature>
<feature type="helix" evidence="4">
    <location>
        <begin position="86"/>
        <end position="94"/>
    </location>
</feature>
<feature type="helix" evidence="4">
    <location>
        <begin position="97"/>
        <end position="99"/>
    </location>
</feature>
<feature type="strand" evidence="4">
    <location>
        <begin position="101"/>
        <end position="106"/>
    </location>
</feature>
<feature type="turn" evidence="4">
    <location>
        <begin position="107"/>
        <end position="109"/>
    </location>
</feature>
<protein>
    <recommendedName>
        <fullName>Putative anti-sigma factor antagonist TM_1442</fullName>
    </recommendedName>
</protein>
<gene>
    <name type="ordered locus">TM_1442</name>
</gene>
<proteinExistence type="evidence at protein level"/>
<dbReference type="EMBL" id="AE000512">
    <property type="protein sequence ID" value="AAD36511.1"/>
    <property type="molecule type" value="Genomic_DNA"/>
</dbReference>
<dbReference type="PIR" id="G72252">
    <property type="entry name" value="G72252"/>
</dbReference>
<dbReference type="RefSeq" id="NP_229241.1">
    <property type="nucleotide sequence ID" value="NC_000853.1"/>
</dbReference>
<dbReference type="RefSeq" id="WP_004081714.1">
    <property type="nucleotide sequence ID" value="NZ_CP011107.1"/>
</dbReference>
<dbReference type="PDB" id="1SBO">
    <property type="method" value="NMR"/>
    <property type="chains" value="A=1-110"/>
</dbReference>
<dbReference type="PDB" id="1T6R">
    <property type="method" value="NMR"/>
    <property type="chains" value="A=1-110"/>
</dbReference>
<dbReference type="PDB" id="1VC1">
    <property type="method" value="X-ray"/>
    <property type="resolution" value="2.00 A"/>
    <property type="chains" value="A/B=1-110"/>
</dbReference>
<dbReference type="PDBsum" id="1SBO"/>
<dbReference type="PDBsum" id="1T6R"/>
<dbReference type="PDBsum" id="1VC1"/>
<dbReference type="BMRB" id="Q9X1F5"/>
<dbReference type="SMR" id="Q9X1F5"/>
<dbReference type="FunCoup" id="Q9X1F5">
    <property type="interactions" value="187"/>
</dbReference>
<dbReference type="STRING" id="243274.TM_1442"/>
<dbReference type="PaxDb" id="243274-THEMA_07105"/>
<dbReference type="EnsemblBacteria" id="AAD36511">
    <property type="protein sequence ID" value="AAD36511"/>
    <property type="gene ID" value="TM_1442"/>
</dbReference>
<dbReference type="KEGG" id="tma:TM1442"/>
<dbReference type="KEGG" id="tmi:THEMA_07105"/>
<dbReference type="KEGG" id="tmm:Tmari_1448"/>
<dbReference type="KEGG" id="tmw:THMA_1472"/>
<dbReference type="eggNOG" id="COG1366">
    <property type="taxonomic scope" value="Bacteria"/>
</dbReference>
<dbReference type="InParanoid" id="Q9X1F5"/>
<dbReference type="OrthoDB" id="9794628at2"/>
<dbReference type="EvolutionaryTrace" id="Q9X1F5"/>
<dbReference type="Proteomes" id="UP000008183">
    <property type="component" value="Chromosome"/>
</dbReference>
<dbReference type="GO" id="GO:0043856">
    <property type="term" value="F:anti-sigma factor antagonist activity"/>
    <property type="evidence" value="ECO:0000318"/>
    <property type="project" value="GO_Central"/>
</dbReference>
<dbReference type="CDD" id="cd07043">
    <property type="entry name" value="STAS_anti-anti-sigma_factors"/>
    <property type="match status" value="1"/>
</dbReference>
<dbReference type="FunFam" id="3.30.750.24:FF:000073">
    <property type="entry name" value="Anti-sigma factor antagonist"/>
    <property type="match status" value="1"/>
</dbReference>
<dbReference type="Gene3D" id="3.30.750.24">
    <property type="entry name" value="STAS domain"/>
    <property type="match status" value="1"/>
</dbReference>
<dbReference type="InterPro" id="IPR003658">
    <property type="entry name" value="Anti-sigma_ant"/>
</dbReference>
<dbReference type="InterPro" id="IPR002645">
    <property type="entry name" value="STAS_dom"/>
</dbReference>
<dbReference type="InterPro" id="IPR036513">
    <property type="entry name" value="STAS_dom_sf"/>
</dbReference>
<dbReference type="NCBIfam" id="TIGR00377">
    <property type="entry name" value="ant_ant_sig"/>
    <property type="match status" value="1"/>
</dbReference>
<dbReference type="PANTHER" id="PTHR33495:SF2">
    <property type="entry name" value="ANTI-SIGMA FACTOR ANTAGONIST TM_1081-RELATED"/>
    <property type="match status" value="1"/>
</dbReference>
<dbReference type="PANTHER" id="PTHR33495">
    <property type="entry name" value="ANTI-SIGMA FACTOR ANTAGONIST TM_1081-RELATED-RELATED"/>
    <property type="match status" value="1"/>
</dbReference>
<dbReference type="Pfam" id="PF01740">
    <property type="entry name" value="STAS"/>
    <property type="match status" value="1"/>
</dbReference>
<dbReference type="SUPFAM" id="SSF52091">
    <property type="entry name" value="SpoIIaa-like"/>
    <property type="match status" value="1"/>
</dbReference>
<dbReference type="PROSITE" id="PS50801">
    <property type="entry name" value="STAS"/>
    <property type="match status" value="1"/>
</dbReference>
<keyword id="KW-0002">3D-structure</keyword>
<keyword id="KW-0597">Phosphoprotein</keyword>
<keyword id="KW-1185">Reference proteome</keyword>
<reference key="1">
    <citation type="journal article" date="1999" name="Nature">
        <title>Evidence for lateral gene transfer between Archaea and Bacteria from genome sequence of Thermotoga maritima.</title>
        <authorList>
            <person name="Nelson K.E."/>
            <person name="Clayton R.A."/>
            <person name="Gill S.R."/>
            <person name="Gwinn M.L."/>
            <person name="Dodson R.J."/>
            <person name="Haft D.H."/>
            <person name="Hickey E.K."/>
            <person name="Peterson J.D."/>
            <person name="Nelson W.C."/>
            <person name="Ketchum K.A."/>
            <person name="McDonald L.A."/>
            <person name="Utterback T.R."/>
            <person name="Malek J.A."/>
            <person name="Linher K.D."/>
            <person name="Garrett M.M."/>
            <person name="Stewart A.M."/>
            <person name="Cotton M.D."/>
            <person name="Pratt M.S."/>
            <person name="Phillips C.A."/>
            <person name="Richardson D.L."/>
            <person name="Heidelberg J.F."/>
            <person name="Sutton G.G."/>
            <person name="Fleischmann R.D."/>
            <person name="Eisen J.A."/>
            <person name="White O."/>
            <person name="Salzberg S.L."/>
            <person name="Smith H.O."/>
            <person name="Venter J.C."/>
            <person name="Fraser C.M."/>
        </authorList>
    </citation>
    <scope>NUCLEOTIDE SEQUENCE [LARGE SCALE GENOMIC DNA]</scope>
    <source>
        <strain>ATCC 43589 / DSM 3109 / JCM 10099 / NBRC 100826 / MSB8</strain>
    </source>
</reference>
<sequence>MNNLKLDIVEQDDKAIVRVQGDIDAYNSSELKEQLRNFISTTSKKKIVLDLSSVSYMDSAGLGTLVVILKDAKINGKEFILSSLKESISRILKLTHLDKIFKITDTVEEA</sequence>
<organism>
    <name type="scientific">Thermotoga maritima (strain ATCC 43589 / DSM 3109 / JCM 10099 / NBRC 100826 / MSB8)</name>
    <dbReference type="NCBI Taxonomy" id="243274"/>
    <lineage>
        <taxon>Bacteria</taxon>
        <taxon>Thermotogati</taxon>
        <taxon>Thermotogota</taxon>
        <taxon>Thermotogae</taxon>
        <taxon>Thermotogales</taxon>
        <taxon>Thermotogaceae</taxon>
        <taxon>Thermotoga</taxon>
    </lineage>
</organism>
<evidence type="ECO:0000250" key="1"/>
<evidence type="ECO:0000255" key="2">
    <source>
        <dbReference type="PROSITE-ProRule" id="PRU00198"/>
    </source>
</evidence>
<evidence type="ECO:0000305" key="3"/>
<evidence type="ECO:0007829" key="4">
    <source>
        <dbReference type="PDB" id="1VC1"/>
    </source>
</evidence>